<proteinExistence type="inferred from homology"/>
<feature type="chain" id="PRO_0000187862" description="Peptidyl-tRNA hydrolase">
    <location>
        <begin position="1"/>
        <end position="192"/>
    </location>
</feature>
<feature type="active site" description="Proton acceptor" evidence="1">
    <location>
        <position position="22"/>
    </location>
</feature>
<feature type="binding site" evidence="1">
    <location>
        <position position="17"/>
    </location>
    <ligand>
        <name>tRNA</name>
        <dbReference type="ChEBI" id="CHEBI:17843"/>
    </ligand>
</feature>
<feature type="binding site" evidence="1">
    <location>
        <position position="68"/>
    </location>
    <ligand>
        <name>tRNA</name>
        <dbReference type="ChEBI" id="CHEBI:17843"/>
    </ligand>
</feature>
<feature type="binding site" evidence="1">
    <location>
        <position position="70"/>
    </location>
    <ligand>
        <name>tRNA</name>
        <dbReference type="ChEBI" id="CHEBI:17843"/>
    </ligand>
</feature>
<feature type="binding site" evidence="1">
    <location>
        <position position="116"/>
    </location>
    <ligand>
        <name>tRNA</name>
        <dbReference type="ChEBI" id="CHEBI:17843"/>
    </ligand>
</feature>
<feature type="site" description="Discriminates between blocked and unblocked aminoacyl-tRNA" evidence="1">
    <location>
        <position position="12"/>
    </location>
</feature>
<feature type="site" description="Stabilizes the basic form of H active site to accept a proton" evidence="1">
    <location>
        <position position="95"/>
    </location>
</feature>
<comment type="function">
    <text evidence="1">Hydrolyzes ribosome-free peptidyl-tRNAs (with 1 or more amino acids incorporated), which drop off the ribosome during protein synthesis, or as a result of ribosome stalling.</text>
</comment>
<comment type="function">
    <text evidence="1">Catalyzes the release of premature peptidyl moieties from peptidyl-tRNA molecules trapped in stalled 50S ribosomal subunits, and thus maintains levels of free tRNAs and 50S ribosomes.</text>
</comment>
<comment type="catalytic activity">
    <reaction evidence="1">
        <text>an N-acyl-L-alpha-aminoacyl-tRNA + H2O = an N-acyl-L-amino acid + a tRNA + H(+)</text>
        <dbReference type="Rhea" id="RHEA:54448"/>
        <dbReference type="Rhea" id="RHEA-COMP:10123"/>
        <dbReference type="Rhea" id="RHEA-COMP:13883"/>
        <dbReference type="ChEBI" id="CHEBI:15377"/>
        <dbReference type="ChEBI" id="CHEBI:15378"/>
        <dbReference type="ChEBI" id="CHEBI:59874"/>
        <dbReference type="ChEBI" id="CHEBI:78442"/>
        <dbReference type="ChEBI" id="CHEBI:138191"/>
        <dbReference type="EC" id="3.1.1.29"/>
    </reaction>
</comment>
<comment type="subunit">
    <text evidence="1">Monomer.</text>
</comment>
<comment type="subcellular location">
    <subcellularLocation>
        <location evidence="1">Cytoplasm</location>
    </subcellularLocation>
</comment>
<comment type="similarity">
    <text evidence="1">Belongs to the PTH family.</text>
</comment>
<evidence type="ECO:0000255" key="1">
    <source>
        <dbReference type="HAMAP-Rule" id="MF_00083"/>
    </source>
</evidence>
<reference key="1">
    <citation type="journal article" date="2003" name="J. Bacteriol.">
        <title>Comparative analyses of the complete genome sequences of Pierce's disease and citrus variegated chlorosis strains of Xylella fastidiosa.</title>
        <authorList>
            <person name="Van Sluys M.A."/>
            <person name="de Oliveira M.C."/>
            <person name="Monteiro-Vitorello C.B."/>
            <person name="Miyaki C.Y."/>
            <person name="Furlan L.R."/>
            <person name="Camargo L.E.A."/>
            <person name="da Silva A.C.R."/>
            <person name="Moon D.H."/>
            <person name="Takita M.A."/>
            <person name="Lemos E.G.M."/>
            <person name="Machado M.A."/>
            <person name="Ferro M.I.T."/>
            <person name="da Silva F.R."/>
            <person name="Goldman M.H.S."/>
            <person name="Goldman G.H."/>
            <person name="Lemos M.V.F."/>
            <person name="El-Dorry H."/>
            <person name="Tsai S.M."/>
            <person name="Carrer H."/>
            <person name="Carraro D.M."/>
            <person name="de Oliveira R.C."/>
            <person name="Nunes L.R."/>
            <person name="Siqueira W.J."/>
            <person name="Coutinho L.L."/>
            <person name="Kimura E.T."/>
            <person name="Ferro E.S."/>
            <person name="Harakava R."/>
            <person name="Kuramae E.E."/>
            <person name="Marino C.L."/>
            <person name="Giglioti E."/>
            <person name="Abreu I.L."/>
            <person name="Alves L.M.C."/>
            <person name="do Amaral A.M."/>
            <person name="Baia G.S."/>
            <person name="Blanco S.R."/>
            <person name="Brito M.S."/>
            <person name="Cannavan F.S."/>
            <person name="Celestino A.V."/>
            <person name="da Cunha A.F."/>
            <person name="Fenille R.C."/>
            <person name="Ferro J.A."/>
            <person name="Formighieri E.F."/>
            <person name="Kishi L.T."/>
            <person name="Leoni S.G."/>
            <person name="Oliveira A.R."/>
            <person name="Rosa V.E. Jr."/>
            <person name="Sassaki F.T."/>
            <person name="Sena J.A.D."/>
            <person name="de Souza A.A."/>
            <person name="Truffi D."/>
            <person name="Tsukumo F."/>
            <person name="Yanai G.M."/>
            <person name="Zaros L.G."/>
            <person name="Civerolo E.L."/>
            <person name="Simpson A.J.G."/>
            <person name="Almeida N.F. Jr."/>
            <person name="Setubal J.C."/>
            <person name="Kitajima J.P."/>
        </authorList>
    </citation>
    <scope>NUCLEOTIDE SEQUENCE [LARGE SCALE GENOMIC DNA]</scope>
    <source>
        <strain>Temecula1 / ATCC 700964</strain>
    </source>
</reference>
<accession>Q87A24</accession>
<name>PTH_XYLFT</name>
<organism>
    <name type="scientific">Xylella fastidiosa (strain Temecula1 / ATCC 700964)</name>
    <dbReference type="NCBI Taxonomy" id="183190"/>
    <lineage>
        <taxon>Bacteria</taxon>
        <taxon>Pseudomonadati</taxon>
        <taxon>Pseudomonadota</taxon>
        <taxon>Gammaproteobacteria</taxon>
        <taxon>Lysobacterales</taxon>
        <taxon>Lysobacteraceae</taxon>
        <taxon>Xylella</taxon>
    </lineage>
</organism>
<protein>
    <recommendedName>
        <fullName evidence="1">Peptidyl-tRNA hydrolase</fullName>
        <shortName evidence="1">Pth</shortName>
        <ecNumber evidence="1">3.1.1.29</ecNumber>
    </recommendedName>
</protein>
<sequence>MLGLRLIVGLGNPGSEYIKTRHNAGFRFVDGLVQREGQCWALESKLFAYVARVFIAGQWVWLLRPVTFMNLSGKSICAGLNFWKIKPEQMLVAHDELDFPPGAVRLKFDGGHGGQNGLRDITKLLGHGRFHRLRVGIGHPGHKDRVVSWVLGCPTCDENIAIDAALERASVVLPLAVAGDFDGAMKKLHTVV</sequence>
<keyword id="KW-0963">Cytoplasm</keyword>
<keyword id="KW-0378">Hydrolase</keyword>
<keyword id="KW-1185">Reference proteome</keyword>
<keyword id="KW-0694">RNA-binding</keyword>
<keyword id="KW-0820">tRNA-binding</keyword>
<gene>
    <name evidence="1" type="primary">pth</name>
    <name type="ordered locus">PD_2014</name>
</gene>
<dbReference type="EC" id="3.1.1.29" evidence="1"/>
<dbReference type="EMBL" id="AE009442">
    <property type="protein sequence ID" value="AAO29839.1"/>
    <property type="molecule type" value="Genomic_DNA"/>
</dbReference>
<dbReference type="RefSeq" id="WP_004087394.1">
    <property type="nucleotide sequence ID" value="NC_004556.1"/>
</dbReference>
<dbReference type="SMR" id="Q87A24"/>
<dbReference type="GeneID" id="93905875"/>
<dbReference type="KEGG" id="xft:PD_2014"/>
<dbReference type="HOGENOM" id="CLU_062456_3_1_6"/>
<dbReference type="Proteomes" id="UP000002516">
    <property type="component" value="Chromosome"/>
</dbReference>
<dbReference type="GO" id="GO:0005737">
    <property type="term" value="C:cytoplasm"/>
    <property type="evidence" value="ECO:0007669"/>
    <property type="project" value="UniProtKB-SubCell"/>
</dbReference>
<dbReference type="GO" id="GO:0004045">
    <property type="term" value="F:peptidyl-tRNA hydrolase activity"/>
    <property type="evidence" value="ECO:0007669"/>
    <property type="project" value="UniProtKB-UniRule"/>
</dbReference>
<dbReference type="GO" id="GO:0000049">
    <property type="term" value="F:tRNA binding"/>
    <property type="evidence" value="ECO:0007669"/>
    <property type="project" value="UniProtKB-UniRule"/>
</dbReference>
<dbReference type="GO" id="GO:0006515">
    <property type="term" value="P:protein quality control for misfolded or incompletely synthesized proteins"/>
    <property type="evidence" value="ECO:0007669"/>
    <property type="project" value="UniProtKB-UniRule"/>
</dbReference>
<dbReference type="GO" id="GO:0072344">
    <property type="term" value="P:rescue of stalled ribosome"/>
    <property type="evidence" value="ECO:0007669"/>
    <property type="project" value="UniProtKB-UniRule"/>
</dbReference>
<dbReference type="CDD" id="cd00462">
    <property type="entry name" value="PTH"/>
    <property type="match status" value="1"/>
</dbReference>
<dbReference type="FunFam" id="3.40.50.1470:FF:000001">
    <property type="entry name" value="Peptidyl-tRNA hydrolase"/>
    <property type="match status" value="1"/>
</dbReference>
<dbReference type="Gene3D" id="3.40.50.1470">
    <property type="entry name" value="Peptidyl-tRNA hydrolase"/>
    <property type="match status" value="1"/>
</dbReference>
<dbReference type="HAMAP" id="MF_00083">
    <property type="entry name" value="Pept_tRNA_hydro_bact"/>
    <property type="match status" value="1"/>
</dbReference>
<dbReference type="InterPro" id="IPR001328">
    <property type="entry name" value="Pept_tRNA_hydro"/>
</dbReference>
<dbReference type="InterPro" id="IPR018171">
    <property type="entry name" value="Pept_tRNA_hydro_CS"/>
</dbReference>
<dbReference type="InterPro" id="IPR036416">
    <property type="entry name" value="Pept_tRNA_hydro_sf"/>
</dbReference>
<dbReference type="NCBIfam" id="TIGR00447">
    <property type="entry name" value="pth"/>
    <property type="match status" value="1"/>
</dbReference>
<dbReference type="PANTHER" id="PTHR17224">
    <property type="entry name" value="PEPTIDYL-TRNA HYDROLASE"/>
    <property type="match status" value="1"/>
</dbReference>
<dbReference type="PANTHER" id="PTHR17224:SF1">
    <property type="entry name" value="PEPTIDYL-TRNA HYDROLASE"/>
    <property type="match status" value="1"/>
</dbReference>
<dbReference type="Pfam" id="PF01195">
    <property type="entry name" value="Pept_tRNA_hydro"/>
    <property type="match status" value="1"/>
</dbReference>
<dbReference type="SUPFAM" id="SSF53178">
    <property type="entry name" value="Peptidyl-tRNA hydrolase-like"/>
    <property type="match status" value="1"/>
</dbReference>
<dbReference type="PROSITE" id="PS01195">
    <property type="entry name" value="PEPT_TRNA_HYDROL_1"/>
    <property type="match status" value="1"/>
</dbReference>